<proteinExistence type="inferred from homology"/>
<keyword id="KW-0067">ATP-binding</keyword>
<keyword id="KW-0173">Coenzyme A biosynthesis</keyword>
<keyword id="KW-0963">Cytoplasm</keyword>
<keyword id="KW-0418">Kinase</keyword>
<keyword id="KW-0547">Nucleotide-binding</keyword>
<keyword id="KW-0808">Transferase</keyword>
<dbReference type="EC" id="2.7.1.33" evidence="1"/>
<dbReference type="EMBL" id="CP001129">
    <property type="protein sequence ID" value="ACG62289.1"/>
    <property type="molecule type" value="Genomic_DNA"/>
</dbReference>
<dbReference type="RefSeq" id="WP_012515560.1">
    <property type="nucleotide sequence ID" value="NC_011134.1"/>
</dbReference>
<dbReference type="SMR" id="B4U2S2"/>
<dbReference type="KEGG" id="sez:Sez_0931"/>
<dbReference type="HOGENOM" id="CLU_053818_1_1_9"/>
<dbReference type="UniPathway" id="UPA00241">
    <property type="reaction ID" value="UER00352"/>
</dbReference>
<dbReference type="Proteomes" id="UP000001873">
    <property type="component" value="Chromosome"/>
</dbReference>
<dbReference type="GO" id="GO:0005737">
    <property type="term" value="C:cytoplasm"/>
    <property type="evidence" value="ECO:0007669"/>
    <property type="project" value="UniProtKB-SubCell"/>
</dbReference>
<dbReference type="GO" id="GO:0005524">
    <property type="term" value="F:ATP binding"/>
    <property type="evidence" value="ECO:0007669"/>
    <property type="project" value="UniProtKB-UniRule"/>
</dbReference>
<dbReference type="GO" id="GO:0004594">
    <property type="term" value="F:pantothenate kinase activity"/>
    <property type="evidence" value="ECO:0007669"/>
    <property type="project" value="UniProtKB-UniRule"/>
</dbReference>
<dbReference type="GO" id="GO:0015937">
    <property type="term" value="P:coenzyme A biosynthetic process"/>
    <property type="evidence" value="ECO:0007669"/>
    <property type="project" value="UniProtKB-UniRule"/>
</dbReference>
<dbReference type="CDD" id="cd02025">
    <property type="entry name" value="PanK"/>
    <property type="match status" value="1"/>
</dbReference>
<dbReference type="Gene3D" id="3.40.50.300">
    <property type="entry name" value="P-loop containing nucleotide triphosphate hydrolases"/>
    <property type="match status" value="1"/>
</dbReference>
<dbReference type="HAMAP" id="MF_00215">
    <property type="entry name" value="Pantothen_kinase_1"/>
    <property type="match status" value="1"/>
</dbReference>
<dbReference type="InterPro" id="IPR027417">
    <property type="entry name" value="P-loop_NTPase"/>
</dbReference>
<dbReference type="InterPro" id="IPR004566">
    <property type="entry name" value="PanK"/>
</dbReference>
<dbReference type="InterPro" id="IPR006083">
    <property type="entry name" value="PRK/URK"/>
</dbReference>
<dbReference type="NCBIfam" id="TIGR00554">
    <property type="entry name" value="panK_bact"/>
    <property type="match status" value="1"/>
</dbReference>
<dbReference type="PANTHER" id="PTHR10285">
    <property type="entry name" value="URIDINE KINASE"/>
    <property type="match status" value="1"/>
</dbReference>
<dbReference type="Pfam" id="PF00485">
    <property type="entry name" value="PRK"/>
    <property type="match status" value="1"/>
</dbReference>
<dbReference type="PIRSF" id="PIRSF000545">
    <property type="entry name" value="Pantothenate_kin"/>
    <property type="match status" value="1"/>
</dbReference>
<dbReference type="SUPFAM" id="SSF52540">
    <property type="entry name" value="P-loop containing nucleoside triphosphate hydrolases"/>
    <property type="match status" value="1"/>
</dbReference>
<accession>B4U2S2</accession>
<reference key="1">
    <citation type="journal article" date="2008" name="PLoS ONE">
        <title>Genome sequence of a lancefield group C Streptococcus zooepidemicus strain causing epidemic nephritis: new information about an old disease.</title>
        <authorList>
            <person name="Beres S.B."/>
            <person name="Sesso R."/>
            <person name="Pinto S.W.L."/>
            <person name="Hoe N.P."/>
            <person name="Porcella S.F."/>
            <person name="Deleo F.R."/>
            <person name="Musser J.M."/>
        </authorList>
    </citation>
    <scope>NUCLEOTIDE SEQUENCE [LARGE SCALE GENOMIC DNA]</scope>
    <source>
        <strain>MGCS10565</strain>
    </source>
</reference>
<organism>
    <name type="scientific">Streptococcus equi subsp. zooepidemicus (strain MGCS10565)</name>
    <dbReference type="NCBI Taxonomy" id="552526"/>
    <lineage>
        <taxon>Bacteria</taxon>
        <taxon>Bacillati</taxon>
        <taxon>Bacillota</taxon>
        <taxon>Bacilli</taxon>
        <taxon>Lactobacillales</taxon>
        <taxon>Streptococcaceae</taxon>
        <taxon>Streptococcus</taxon>
    </lineage>
</organism>
<evidence type="ECO:0000255" key="1">
    <source>
        <dbReference type="HAMAP-Rule" id="MF_00215"/>
    </source>
</evidence>
<protein>
    <recommendedName>
        <fullName evidence="1">Pantothenate kinase</fullName>
        <ecNumber evidence="1">2.7.1.33</ecNumber>
    </recommendedName>
    <alternativeName>
        <fullName evidence="1">Pantothenic acid kinase</fullName>
    </alternativeName>
</protein>
<sequence length="306" mass="35587">MSNEFITFEKISRKSWKQLHQKSKPLLTQEELTSITSLNDNIDINDVIEVYLPLIHLIQIYKIAQENLSFSKSLFLKKDIQQRPFIIGISGSVAVGKSTTSRLLQLLLARTHKTSTVELVTTDGFLYPNSTLIKNNMLNRKGFPESYNMELLLNFLDTVKGGQTASAPVYSHEIYDIVPDQQQTFTNPDFLIIEGINVFQNQQNNRLYMSDYFDFSIYIDADSHHIEQWYLERFLSLLELAKHDPANYYTRYTSLPQNEAIAFAKKVWKTINLENLEKFIEPTRNRAELILHKAADHKIDEIYLKK</sequence>
<comment type="catalytic activity">
    <reaction evidence="1">
        <text>(R)-pantothenate + ATP = (R)-4'-phosphopantothenate + ADP + H(+)</text>
        <dbReference type="Rhea" id="RHEA:16373"/>
        <dbReference type="ChEBI" id="CHEBI:10986"/>
        <dbReference type="ChEBI" id="CHEBI:15378"/>
        <dbReference type="ChEBI" id="CHEBI:29032"/>
        <dbReference type="ChEBI" id="CHEBI:30616"/>
        <dbReference type="ChEBI" id="CHEBI:456216"/>
        <dbReference type="EC" id="2.7.1.33"/>
    </reaction>
</comment>
<comment type="pathway">
    <text evidence="1">Cofactor biosynthesis; coenzyme A biosynthesis; CoA from (R)-pantothenate: step 1/5.</text>
</comment>
<comment type="subcellular location">
    <subcellularLocation>
        <location evidence="1">Cytoplasm</location>
    </subcellularLocation>
</comment>
<comment type="similarity">
    <text evidence="1">Belongs to the prokaryotic pantothenate kinase family.</text>
</comment>
<feature type="chain" id="PRO_1000099953" description="Pantothenate kinase">
    <location>
        <begin position="1"/>
        <end position="306"/>
    </location>
</feature>
<feature type="binding site" evidence="1">
    <location>
        <begin position="91"/>
        <end position="98"/>
    </location>
    <ligand>
        <name>ATP</name>
        <dbReference type="ChEBI" id="CHEBI:30616"/>
    </ligand>
</feature>
<name>COAA_STREM</name>
<gene>
    <name evidence="1" type="primary">coaA</name>
    <name type="ordered locus">Sez_0931</name>
</gene>